<organism>
    <name type="scientific">Emericella nidulans (strain FGSC A4 / ATCC 38163 / CBS 112.46 / NRRL 194 / M139)</name>
    <name type="common">Aspergillus nidulans</name>
    <dbReference type="NCBI Taxonomy" id="227321"/>
    <lineage>
        <taxon>Eukaryota</taxon>
        <taxon>Fungi</taxon>
        <taxon>Dikarya</taxon>
        <taxon>Ascomycota</taxon>
        <taxon>Pezizomycotina</taxon>
        <taxon>Eurotiomycetes</taxon>
        <taxon>Eurotiomycetidae</taxon>
        <taxon>Eurotiales</taxon>
        <taxon>Aspergillaceae</taxon>
        <taxon>Aspergillus</taxon>
        <taxon>Aspergillus subgen. Nidulantes</taxon>
    </lineage>
</organism>
<comment type="function">
    <text evidence="3">Involved in regulation of nuclear migration. May be involved in regulating nuclear positioning.</text>
</comment>
<comment type="subcellular location">
    <subcellularLocation>
        <location evidence="3">Cytoplasm</location>
    </subcellularLocation>
</comment>
<gene>
    <name type="primary">apsB</name>
    <name type="ORF">AN3437</name>
</gene>
<sequence length="1051" mass="121015">MTLKEQSSTIDRLSKENFDLKMRIHFLNEALNRRSEEGIKEMISENVELKSDKLKLQKDNQGLKRKIRDLEKQLKDQQSDKESMLNHDPEGGSDEEDRDHAQDEELLFLRERVETYELEIERLRSESIARESEKRRLAEMLKSLNDGRPTGSDSGAREERDMWKDMLDAETAAREQADEENKRLREELMRVRSEATYAIAPAAPLRSGHRNRGDSLVSHSAVSDRELYRNTAAGSSSSSTLVMEFELLKQENAELRREVSAQTSMLTSRNREKERLYQEIEELKLGQRRDRSIAGDSILDRSASRAQGRPSSSISDRTGQSPIDDAEREDWELRNGQLRDQVSALKLENQAIRQELEELDKAYSADVEQAEEDIQTLQQERDQAMQVAEERDAAFQELRAEAQEELDALGDELDQKIEECQRLTEDLRTQDDNLRALQAEMRSASEGIIRLEEDAQNNLQRYKAVQQELEQCNEEMESLEKSLYEANSKVQRLTVQIESSQNEIAFLREEQDGDKIKIGDLESELKTYRMSLQSEKDKTKELEGRLAEERYQREVVGSKEKQEVQRIMNELNREVSAAKEECRKLKKNLSAQEIETNTWKERLTDLENNLRETLGDLTGSRSSLIANIMKLQKELESTALELESTRSTLDEKETLLRNRDALLESHGLESRKLSELLERERQARRADKQSFEQALKSHHQASRTITQNNSRILELENARNQDRKRFTSLEQQFREQLNERNSMLLTIWKRLSGMCGPDWAHSNSLINGNLPSQEVIGNILFWPGFSRNLLLAVKTLENVISSFKTRVKDVERNLTKQYQTLEHAFSLRIKKLDRLEETTMNMRAQLQTRNQTGLSPELSKLRGENRLLKAELNLLQNHPRSRSTTAGVAGSPQSSTIDLAERGSLVRANTAAESPARSSIPQPAQMTNLAEPTGAVTRPRQFKPSDNHGNQEVWIKRLHELERRLKAEREARLLDRNGARRRLEERDAENKRLRAQLDRQRLRQGVSTETSTDDGGHGPPSEPTTGDEGYREREEEHSSSEGEGITVDIEV</sequence>
<feature type="chain" id="PRO_0000064646" description="Anucleate primary sterigmata protein B">
    <location>
        <begin position="1"/>
        <end position="1051"/>
    </location>
</feature>
<feature type="region of interest" description="Disordered" evidence="2">
    <location>
        <begin position="58"/>
        <end position="100"/>
    </location>
</feature>
<feature type="region of interest" description="Disordered" evidence="2">
    <location>
        <begin position="141"/>
        <end position="160"/>
    </location>
</feature>
<feature type="region of interest" description="Disordered" evidence="2">
    <location>
        <begin position="294"/>
        <end position="329"/>
    </location>
</feature>
<feature type="region of interest" description="Disordered" evidence="2">
    <location>
        <begin position="877"/>
        <end position="902"/>
    </location>
</feature>
<feature type="region of interest" description="Disordered" evidence="2">
    <location>
        <begin position="909"/>
        <end position="928"/>
    </location>
</feature>
<feature type="region of interest" description="Disordered" evidence="2">
    <location>
        <begin position="984"/>
        <end position="1051"/>
    </location>
</feature>
<feature type="coiled-coil region" evidence="1">
    <location>
        <begin position="10"/>
        <end position="200"/>
    </location>
</feature>
<feature type="coiled-coil region" evidence="1">
    <location>
        <begin position="239"/>
        <end position="285"/>
    </location>
</feature>
<feature type="coiled-coil region" evidence="1">
    <location>
        <begin position="325"/>
        <end position="743"/>
    </location>
</feature>
<feature type="coiled-coil region" evidence="1">
    <location>
        <begin position="787"/>
        <end position="878"/>
    </location>
</feature>
<feature type="coiled-coil region" evidence="1">
    <location>
        <begin position="950"/>
        <end position="1004"/>
    </location>
</feature>
<feature type="compositionally biased region" description="Basic and acidic residues" evidence="2">
    <location>
        <begin position="58"/>
        <end position="90"/>
    </location>
</feature>
<feature type="compositionally biased region" description="Basic and acidic residues" evidence="2">
    <location>
        <begin position="294"/>
        <end position="303"/>
    </location>
</feature>
<feature type="compositionally biased region" description="Polar residues" evidence="2">
    <location>
        <begin position="309"/>
        <end position="321"/>
    </location>
</feature>
<feature type="compositionally biased region" description="Polar residues" evidence="2">
    <location>
        <begin position="877"/>
        <end position="897"/>
    </location>
</feature>
<feature type="compositionally biased region" description="Polar residues" evidence="2">
    <location>
        <begin position="916"/>
        <end position="928"/>
    </location>
</feature>
<feature type="compositionally biased region" description="Basic and acidic residues" evidence="2">
    <location>
        <begin position="984"/>
        <end position="1001"/>
    </location>
</feature>
<feature type="compositionally biased region" description="Basic and acidic residues" evidence="2">
    <location>
        <begin position="1028"/>
        <end position="1040"/>
    </location>
</feature>
<feature type="sequence conflict" description="In Ref. 1; CAA05918." evidence="4" ref="1">
    <original>M</original>
    <variation>I</variation>
    <location>
        <position position="840"/>
    </location>
</feature>
<reference key="1">
    <citation type="journal article" date="1998" name="Mol. Microbiol.">
        <title>Increased nuclear traffic chaos in hyphae of Aspergillus nidulans: molecular characterization of apsB and in vivo observation of nuclear behaviour.</title>
        <authorList>
            <person name="Suelmann R."/>
            <person name="Sievers N."/>
            <person name="Galetzka D."/>
            <person name="Robertson L."/>
            <person name="Timberlake W.E."/>
            <person name="Fischer R."/>
        </authorList>
    </citation>
    <scope>NUCLEOTIDE SEQUENCE [GENOMIC DNA]</scope>
    <scope>FUNCTION</scope>
    <scope>SUBCELLULAR LOCATION</scope>
</reference>
<reference key="2">
    <citation type="journal article" date="2005" name="Nature">
        <title>Sequencing of Aspergillus nidulans and comparative analysis with A. fumigatus and A. oryzae.</title>
        <authorList>
            <person name="Galagan J.E."/>
            <person name="Calvo S.E."/>
            <person name="Cuomo C."/>
            <person name="Ma L.-J."/>
            <person name="Wortman J.R."/>
            <person name="Batzoglou S."/>
            <person name="Lee S.-I."/>
            <person name="Bastuerkmen M."/>
            <person name="Spevak C.C."/>
            <person name="Clutterbuck J."/>
            <person name="Kapitonov V."/>
            <person name="Jurka J."/>
            <person name="Scazzocchio C."/>
            <person name="Farman M.L."/>
            <person name="Butler J."/>
            <person name="Purcell S."/>
            <person name="Harris S."/>
            <person name="Braus G.H."/>
            <person name="Draht O."/>
            <person name="Busch S."/>
            <person name="D'Enfert C."/>
            <person name="Bouchier C."/>
            <person name="Goldman G.H."/>
            <person name="Bell-Pedersen D."/>
            <person name="Griffiths-Jones S."/>
            <person name="Doonan J.H."/>
            <person name="Yu J."/>
            <person name="Vienken K."/>
            <person name="Pain A."/>
            <person name="Freitag M."/>
            <person name="Selker E.U."/>
            <person name="Archer D.B."/>
            <person name="Penalva M.A."/>
            <person name="Oakley B.R."/>
            <person name="Momany M."/>
            <person name="Tanaka T."/>
            <person name="Kumagai T."/>
            <person name="Asai K."/>
            <person name="Machida M."/>
            <person name="Nierman W.C."/>
            <person name="Denning D.W."/>
            <person name="Caddick M.X."/>
            <person name="Hynes M."/>
            <person name="Paoletti M."/>
            <person name="Fischer R."/>
            <person name="Miller B.L."/>
            <person name="Dyer P.S."/>
            <person name="Sachs M.S."/>
            <person name="Osmani S.A."/>
            <person name="Birren B.W."/>
        </authorList>
    </citation>
    <scope>NUCLEOTIDE SEQUENCE [LARGE SCALE GENOMIC DNA]</scope>
    <source>
        <strain>FGSC A4 / ATCC 38163 / CBS 112.46 / NRRL 194 / M139</strain>
    </source>
</reference>
<reference key="3">
    <citation type="journal article" date="2009" name="Fungal Genet. Biol.">
        <title>The 2008 update of the Aspergillus nidulans genome annotation: a community effort.</title>
        <authorList>
            <person name="Wortman J.R."/>
            <person name="Gilsenan J.M."/>
            <person name="Joardar V."/>
            <person name="Deegan J."/>
            <person name="Clutterbuck J."/>
            <person name="Andersen M.R."/>
            <person name="Archer D."/>
            <person name="Bencina M."/>
            <person name="Braus G."/>
            <person name="Coutinho P."/>
            <person name="von Dohren H."/>
            <person name="Doonan J."/>
            <person name="Driessen A.J."/>
            <person name="Durek P."/>
            <person name="Espeso E."/>
            <person name="Fekete E."/>
            <person name="Flipphi M."/>
            <person name="Estrada C.G."/>
            <person name="Geysens S."/>
            <person name="Goldman G."/>
            <person name="de Groot P.W."/>
            <person name="Hansen K."/>
            <person name="Harris S.D."/>
            <person name="Heinekamp T."/>
            <person name="Helmstaedt K."/>
            <person name="Henrissat B."/>
            <person name="Hofmann G."/>
            <person name="Homan T."/>
            <person name="Horio T."/>
            <person name="Horiuchi H."/>
            <person name="James S."/>
            <person name="Jones M."/>
            <person name="Karaffa L."/>
            <person name="Karanyi Z."/>
            <person name="Kato M."/>
            <person name="Keller N."/>
            <person name="Kelly D.E."/>
            <person name="Kiel J.A."/>
            <person name="Kim J.M."/>
            <person name="van der Klei I.J."/>
            <person name="Klis F.M."/>
            <person name="Kovalchuk A."/>
            <person name="Krasevec N."/>
            <person name="Kubicek C.P."/>
            <person name="Liu B."/>
            <person name="Maccabe A."/>
            <person name="Meyer V."/>
            <person name="Mirabito P."/>
            <person name="Miskei M."/>
            <person name="Mos M."/>
            <person name="Mullins J."/>
            <person name="Nelson D.R."/>
            <person name="Nielsen J."/>
            <person name="Oakley B.R."/>
            <person name="Osmani S.A."/>
            <person name="Pakula T."/>
            <person name="Paszewski A."/>
            <person name="Paulsen I."/>
            <person name="Pilsyk S."/>
            <person name="Pocsi I."/>
            <person name="Punt P.J."/>
            <person name="Ram A.F."/>
            <person name="Ren Q."/>
            <person name="Robellet X."/>
            <person name="Robson G."/>
            <person name="Seiboth B."/>
            <person name="van Solingen P."/>
            <person name="Specht T."/>
            <person name="Sun J."/>
            <person name="Taheri-Talesh N."/>
            <person name="Takeshita N."/>
            <person name="Ussery D."/>
            <person name="vanKuyk P.A."/>
            <person name="Visser H."/>
            <person name="van de Vondervoort P.J."/>
            <person name="de Vries R.P."/>
            <person name="Walton J."/>
            <person name="Xiang X."/>
            <person name="Xiong Y."/>
            <person name="Zeng A.P."/>
            <person name="Brandt B.W."/>
            <person name="Cornell M.J."/>
            <person name="van den Hondel C.A."/>
            <person name="Visser J."/>
            <person name="Oliver S.G."/>
            <person name="Turner G."/>
        </authorList>
    </citation>
    <scope>GENOME REANNOTATION</scope>
    <source>
        <strain>FGSC A4 / ATCC 38163 / CBS 112.46 / NRRL 194 / M139</strain>
    </source>
</reference>
<name>APSB_EMENI</name>
<proteinExistence type="predicted"/>
<dbReference type="EMBL" id="AJ003163">
    <property type="protein sequence ID" value="CAA05918.1"/>
    <property type="molecule type" value="Genomic_DNA"/>
</dbReference>
<dbReference type="EMBL" id="AACD01000057">
    <property type="protein sequence ID" value="EAA62893.1"/>
    <property type="molecule type" value="Genomic_DNA"/>
</dbReference>
<dbReference type="EMBL" id="BN001306">
    <property type="protein sequence ID" value="CBF82712.1"/>
    <property type="molecule type" value="Genomic_DNA"/>
</dbReference>
<dbReference type="PIR" id="T18302">
    <property type="entry name" value="T18302"/>
</dbReference>
<dbReference type="RefSeq" id="XP_661041.1">
    <property type="nucleotide sequence ID" value="XM_655949.1"/>
</dbReference>
<dbReference type="SMR" id="O60039"/>
<dbReference type="STRING" id="227321.O60039"/>
<dbReference type="EnsemblFungi" id="CBF82712">
    <property type="protein sequence ID" value="CBF82712"/>
    <property type="gene ID" value="ANIA_03437"/>
</dbReference>
<dbReference type="GeneID" id="2874340"/>
<dbReference type="KEGG" id="ani:ANIA_03437"/>
<dbReference type="eggNOG" id="ENOG502QU0H">
    <property type="taxonomic scope" value="Eukaryota"/>
</dbReference>
<dbReference type="HOGENOM" id="CLU_000791_0_0_1"/>
<dbReference type="InParanoid" id="O60039"/>
<dbReference type="OMA" id="GNILFWP"/>
<dbReference type="OrthoDB" id="10255000at2759"/>
<dbReference type="Proteomes" id="UP000000560">
    <property type="component" value="Chromosome VI"/>
</dbReference>
<dbReference type="GO" id="GO:0005737">
    <property type="term" value="C:cytoplasm"/>
    <property type="evidence" value="ECO:0007669"/>
    <property type="project" value="UniProtKB-SubCell"/>
</dbReference>
<dbReference type="GO" id="GO:0005815">
    <property type="term" value="C:microtubule organizing center"/>
    <property type="evidence" value="ECO:0007669"/>
    <property type="project" value="InterPro"/>
</dbReference>
<dbReference type="Gene3D" id="1.10.287.1490">
    <property type="match status" value="1"/>
</dbReference>
<dbReference type="InterPro" id="IPR012943">
    <property type="entry name" value="Cnn_1N"/>
</dbReference>
<dbReference type="InterPro" id="IPR024545">
    <property type="entry name" value="Mto1-like_Mto2p-bd"/>
</dbReference>
<dbReference type="Pfam" id="PF07989">
    <property type="entry name" value="Cnn_1N"/>
    <property type="match status" value="1"/>
</dbReference>
<dbReference type="Pfam" id="PF12808">
    <property type="entry name" value="Mto2_bdg"/>
    <property type="match status" value="2"/>
</dbReference>
<protein>
    <recommendedName>
        <fullName>Anucleate primary sterigmata protein B</fullName>
    </recommendedName>
</protein>
<accession>O60039</accession>
<accession>C8VHD3</accession>
<accession>Q5B7P3</accession>
<evidence type="ECO:0000255" key="1"/>
<evidence type="ECO:0000256" key="2">
    <source>
        <dbReference type="SAM" id="MobiDB-lite"/>
    </source>
</evidence>
<evidence type="ECO:0000269" key="3">
    <source>
    </source>
</evidence>
<evidence type="ECO:0000305" key="4"/>
<keyword id="KW-0175">Coiled coil</keyword>
<keyword id="KW-0963">Cytoplasm</keyword>
<keyword id="KW-1185">Reference proteome</keyword>